<comment type="function">
    <text evidence="1 3 4">Catalyzes the dehydration of galactarate to form 5-dehydro-4-deoxy-D-glucarate (5-KDG).</text>
</comment>
<comment type="catalytic activity">
    <reaction evidence="1 3 4">
        <text>galactarate = 5-dehydro-4-deoxy-D-glucarate + H2O</text>
        <dbReference type="Rhea" id="RHEA:16005"/>
        <dbReference type="ChEBI" id="CHEBI:15377"/>
        <dbReference type="ChEBI" id="CHEBI:16537"/>
        <dbReference type="ChEBI" id="CHEBI:42819"/>
        <dbReference type="EC" id="4.2.1.42"/>
    </reaction>
    <physiologicalReaction direction="left-to-right" evidence="3 4">
        <dbReference type="Rhea" id="RHEA:16006"/>
    </physiologicalReaction>
</comment>
<comment type="cofactor">
    <cofactor evidence="3">
        <name>Fe(2+)</name>
        <dbReference type="ChEBI" id="CHEBI:29033"/>
    </cofactor>
</comment>
<comment type="biophysicochemical properties">
    <kinetics>
        <KM evidence="4">800 uM for galactarate</KM>
        <text evidence="4">kcat is 22 sec(-1).</text>
    </kinetics>
</comment>
<comment type="pathway">
    <text evidence="1 4">Carbohydrate acid metabolism; galactarate degradation; D-glycerate from galactarate: step 1/3.</text>
</comment>
<comment type="subunit">
    <text evidence="3">Homodimer.</text>
</comment>
<comment type="induction">
    <text evidence="2">Induced by galactarate, D-glucarate and D-glycerate.</text>
</comment>
<comment type="domain">
    <text evidence="3">Consists of three domains. The N-terminal SAF domain, which forms a beta-clip fold, is likely involved in the substrate recognition. It is connected by a long unstructured linker to the second domain, which serves as a dimerization interface between two monomers. The C-terminal domain represents the catalytic core of the protein and probably contains the metal binding site.</text>
</comment>
<comment type="similarity">
    <text evidence="1 7">Belongs to the UxaA family.</text>
</comment>
<reference key="1">
    <citation type="journal article" date="1997" name="Science">
        <title>The complete genome sequence of Escherichia coli K-12.</title>
        <authorList>
            <person name="Blattner F.R."/>
            <person name="Plunkett G. III"/>
            <person name="Bloch C.A."/>
            <person name="Perna N.T."/>
            <person name="Burland V."/>
            <person name="Riley M."/>
            <person name="Collado-Vides J."/>
            <person name="Glasner J.D."/>
            <person name="Rode C.K."/>
            <person name="Mayhew G.F."/>
            <person name="Gregor J."/>
            <person name="Davis N.W."/>
            <person name="Kirkpatrick H.A."/>
            <person name="Goeden M.A."/>
            <person name="Rose D.J."/>
            <person name="Mau B."/>
            <person name="Shao Y."/>
        </authorList>
    </citation>
    <scope>NUCLEOTIDE SEQUENCE [LARGE SCALE GENOMIC DNA]</scope>
    <source>
        <strain>K12 / MG1655 / ATCC 47076</strain>
    </source>
</reference>
<reference key="2">
    <citation type="journal article" date="2006" name="Mol. Syst. Biol.">
        <title>Highly accurate genome sequences of Escherichia coli K-12 strains MG1655 and W3110.</title>
        <authorList>
            <person name="Hayashi K."/>
            <person name="Morooka N."/>
            <person name="Yamamoto Y."/>
            <person name="Fujita K."/>
            <person name="Isono K."/>
            <person name="Choi S."/>
            <person name="Ohtsubo E."/>
            <person name="Baba T."/>
            <person name="Wanner B.L."/>
            <person name="Mori H."/>
            <person name="Horiuchi T."/>
        </authorList>
    </citation>
    <scope>NUCLEOTIDE SEQUENCE [LARGE SCALE GENOMIC DNA]</scope>
    <source>
        <strain>K12 / W3110 / ATCC 27325 / DSM 5911</strain>
    </source>
</reference>
<reference key="3">
    <citation type="journal article" date="1990" name="J. Bacteriol.">
        <title>Identification, cloning, and characterization of the Escherichia coli sohA gene, a suppressor of the htrA (degP) null phenotype.</title>
        <authorList>
            <person name="Baird L."/>
            <person name="Georgopoulos C."/>
        </authorList>
    </citation>
    <scope>NUCLEOTIDE SEQUENCE [GENOMIC DNA] OF 449-523</scope>
</reference>
<reference key="4">
    <citation type="unpublished observations" date="1994-12">
        <authorList>
            <person name="Rudd K.E."/>
        </authorList>
    </citation>
    <scope>IDENTIFICATION</scope>
</reference>
<reference key="5">
    <citation type="journal article" date="1998" name="Biochemistry">
        <title>Evolution of enzymatic activities in the enolase superfamily: characterization of the (D)-glucarate/galactarate catabolic pathway in Escherichia coli.</title>
        <authorList>
            <person name="Hubbard B.K."/>
            <person name="Koch M."/>
            <person name="Palmer D.R."/>
            <person name="Babbitt P.C."/>
            <person name="Gerlt J.A."/>
        </authorList>
    </citation>
    <scope>FUNCTION</scope>
    <scope>CATALYTIC ACTIVITY</scope>
    <scope>BIOPHYSICOCHEMICAL PROPERTIES</scope>
    <scope>PATHWAY</scope>
</reference>
<reference key="6">
    <citation type="journal article" date="2000" name="J. Bacteriol.">
        <title>A common regulator for the operons encoding the enzymes involved in D-galactarate, D-glucarate, and D-glycerate utilization in Escherichia coli.</title>
        <authorList>
            <person name="Monterrubio R."/>
            <person name="Baldoma L."/>
            <person name="Obradors N."/>
            <person name="Aguilar J."/>
            <person name="Badia J."/>
        </authorList>
    </citation>
    <scope>GENE NAME</scope>
    <scope>INDUCTION</scope>
</reference>
<reference evidence="8" key="7">
    <citation type="submission" date="2010-01" db="PDB data bank">
        <title>The crystal structure of the N-terminal domain of D-galactarate dehydratase from Escherichia coli CFT073.</title>
        <authorList>
            <consortium name="Midwest center for structural genomics (MCSG)"/>
        </authorList>
    </citation>
    <scope>X-RAY CRYSTALLOGRAPHY (1.92 ANGSTROMS) OF 6-96</scope>
</reference>
<reference evidence="9" key="8">
    <citation type="journal article" date="2020" name="Protein Sci.">
        <title>Structure of galactarate dehydratase, a new fold in an enolase involved in bacterial fitness after antibiotic treatment.</title>
        <authorList>
            <person name="Rosas-Lemus M."/>
            <person name="Minasov G."/>
            <person name="Shuvalova L."/>
            <person name="Wawrzak Z."/>
            <person name="Kiryukhina O."/>
            <person name="Mih N."/>
            <person name="Jaroszewski L."/>
            <person name="Palsson B."/>
            <person name="Godzik A."/>
            <person name="Satchell K.J.F."/>
        </authorList>
    </citation>
    <scope>X-RAY CRYSTALLOGRAPHY (2.75 ANGSTROMS) IN COMPLEX WITH CALCIUM</scope>
    <scope>FUNCTION</scope>
    <scope>CATALYTIC ACTIVITY</scope>
    <scope>COFACTOR</scope>
    <scope>SUBUNIT</scope>
    <scope>DOMAIN</scope>
</reference>
<evidence type="ECO:0000255" key="1">
    <source>
        <dbReference type="HAMAP-Rule" id="MF_02031"/>
    </source>
</evidence>
<evidence type="ECO:0000269" key="2">
    <source>
    </source>
</evidence>
<evidence type="ECO:0000269" key="3">
    <source>
    </source>
</evidence>
<evidence type="ECO:0000269" key="4">
    <source>
    </source>
</evidence>
<evidence type="ECO:0000303" key="5">
    <source>
    </source>
</evidence>
<evidence type="ECO:0000303" key="6">
    <source>
    </source>
</evidence>
<evidence type="ECO:0000305" key="7"/>
<evidence type="ECO:0007744" key="8">
    <source>
        <dbReference type="PDB" id="3LAZ"/>
    </source>
</evidence>
<evidence type="ECO:0007744" key="9">
    <source>
        <dbReference type="PDB" id="6U7L"/>
    </source>
</evidence>
<evidence type="ECO:0007829" key="10">
    <source>
        <dbReference type="PDB" id="3LAZ"/>
    </source>
</evidence>
<evidence type="ECO:0007829" key="11">
    <source>
        <dbReference type="PDB" id="6U7L"/>
    </source>
</evidence>
<feature type="chain" id="PRO_0000172285" description="Galactarate dehydratase (L-threo-forming)">
    <location>
        <begin position="1"/>
        <end position="523"/>
    </location>
</feature>
<feature type="helix" evidence="10">
    <location>
        <begin position="1"/>
        <end position="3"/>
    </location>
</feature>
<feature type="strand" evidence="10">
    <location>
        <begin position="14"/>
        <end position="16"/>
    </location>
</feature>
<feature type="strand" evidence="10">
    <location>
        <begin position="23"/>
        <end position="29"/>
    </location>
</feature>
<feature type="strand" evidence="10">
    <location>
        <begin position="54"/>
        <end position="58"/>
    </location>
</feature>
<feature type="strand" evidence="10">
    <location>
        <begin position="65"/>
        <end position="68"/>
    </location>
</feature>
<feature type="strand" evidence="10">
    <location>
        <begin position="71"/>
        <end position="78"/>
    </location>
</feature>
<feature type="helix" evidence="10">
    <location>
        <begin position="88"/>
        <end position="90"/>
    </location>
</feature>
<feature type="helix" evidence="11">
    <location>
        <begin position="99"/>
        <end position="101"/>
    </location>
</feature>
<feature type="strand" evidence="11">
    <location>
        <begin position="104"/>
        <end position="106"/>
    </location>
</feature>
<feature type="strand" evidence="11">
    <location>
        <begin position="119"/>
        <end position="124"/>
    </location>
</feature>
<feature type="strand" evidence="11">
    <location>
        <begin position="130"/>
        <end position="133"/>
    </location>
</feature>
<feature type="strand" evidence="11">
    <location>
        <begin position="135"/>
        <end position="139"/>
    </location>
</feature>
<feature type="helix" evidence="11">
    <location>
        <begin position="148"/>
        <end position="159"/>
    </location>
</feature>
<feature type="helix" evidence="11">
    <location>
        <begin position="161"/>
        <end position="163"/>
    </location>
</feature>
<feature type="strand" evidence="11">
    <location>
        <begin position="169"/>
        <end position="172"/>
    </location>
</feature>
<feature type="helix" evidence="11">
    <location>
        <begin position="189"/>
        <end position="198"/>
    </location>
</feature>
<feature type="helix" evidence="11">
    <location>
        <begin position="202"/>
        <end position="204"/>
    </location>
</feature>
<feature type="helix" evidence="11">
    <location>
        <begin position="251"/>
        <end position="270"/>
    </location>
</feature>
<feature type="strand" evidence="11">
    <location>
        <begin position="275"/>
        <end position="278"/>
    </location>
</feature>
<feature type="helix" evidence="11">
    <location>
        <begin position="279"/>
        <end position="281"/>
    </location>
</feature>
<feature type="strand" evidence="11">
    <location>
        <begin position="283"/>
        <end position="290"/>
    </location>
</feature>
<feature type="helix" evidence="11">
    <location>
        <begin position="295"/>
        <end position="297"/>
    </location>
</feature>
<feature type="helix" evidence="11">
    <location>
        <begin position="299"/>
        <end position="312"/>
    </location>
</feature>
<feature type="strand" evidence="11">
    <location>
        <begin position="316"/>
        <end position="319"/>
    </location>
</feature>
<feature type="helix" evidence="11">
    <location>
        <begin position="322"/>
        <end position="325"/>
    </location>
</feature>
<feature type="helix" evidence="11">
    <location>
        <begin position="326"/>
        <end position="331"/>
    </location>
</feature>
<feature type="helix" evidence="11">
    <location>
        <begin position="333"/>
        <end position="335"/>
    </location>
</feature>
<feature type="strand" evidence="11">
    <location>
        <begin position="336"/>
        <end position="338"/>
    </location>
</feature>
<feature type="helix" evidence="11">
    <location>
        <begin position="339"/>
        <end position="355"/>
    </location>
</feature>
<feature type="helix" evidence="11">
    <location>
        <begin position="379"/>
        <end position="386"/>
    </location>
</feature>
<feature type="helix" evidence="11">
    <location>
        <begin position="387"/>
        <end position="390"/>
    </location>
</feature>
<feature type="strand" evidence="11">
    <location>
        <begin position="395"/>
        <end position="399"/>
    </location>
</feature>
<feature type="strand" evidence="11">
    <location>
        <begin position="409"/>
        <end position="413"/>
    </location>
</feature>
<feature type="helix" evidence="11">
    <location>
        <begin position="419"/>
        <end position="429"/>
    </location>
</feature>
<feature type="strand" evidence="11">
    <location>
        <begin position="432"/>
        <end position="440"/>
    </location>
</feature>
<feature type="strand" evidence="11">
    <location>
        <begin position="447"/>
        <end position="449"/>
    </location>
</feature>
<feature type="strand" evidence="11">
    <location>
        <begin position="451"/>
        <end position="457"/>
    </location>
</feature>
<feature type="helix" evidence="11">
    <location>
        <begin position="458"/>
        <end position="463"/>
    </location>
</feature>
<feature type="turn" evidence="11">
    <location>
        <begin position="464"/>
        <end position="467"/>
    </location>
</feature>
<feature type="strand" evidence="11">
    <location>
        <begin position="469"/>
        <end position="471"/>
    </location>
</feature>
<feature type="turn" evidence="11">
    <location>
        <begin position="473"/>
        <end position="478"/>
    </location>
</feature>
<feature type="helix" evidence="11">
    <location>
        <begin position="482"/>
        <end position="497"/>
    </location>
</feature>
<feature type="helix" evidence="11">
    <location>
        <begin position="504"/>
        <end position="508"/>
    </location>
</feature>
<accession>P39829</accession>
<accession>Q2M981</accession>
<gene>
    <name evidence="1 5" type="primary">garD</name>
    <name type="synonym">yhaG</name>
    <name type="ordered locus">b3128</name>
    <name type="ordered locus">JW3097</name>
</gene>
<dbReference type="EC" id="4.2.1.42" evidence="1 4"/>
<dbReference type="EMBL" id="U18997">
    <property type="protein sequence ID" value="AAA57931.1"/>
    <property type="molecule type" value="Genomic_DNA"/>
</dbReference>
<dbReference type="EMBL" id="U00096">
    <property type="protein sequence ID" value="AAC76162.1"/>
    <property type="molecule type" value="Genomic_DNA"/>
</dbReference>
<dbReference type="EMBL" id="AP009048">
    <property type="protein sequence ID" value="BAE77175.1"/>
    <property type="molecule type" value="Genomic_DNA"/>
</dbReference>
<dbReference type="EMBL" id="M30178">
    <property type="status" value="NOT_ANNOTATED_CDS"/>
    <property type="molecule type" value="Genomic_DNA"/>
</dbReference>
<dbReference type="PIR" id="D65102">
    <property type="entry name" value="D65102"/>
</dbReference>
<dbReference type="RefSeq" id="NP_417597.1">
    <property type="nucleotide sequence ID" value="NC_000913.3"/>
</dbReference>
<dbReference type="RefSeq" id="WP_001273753.1">
    <property type="nucleotide sequence ID" value="NZ_JACEFS010000006.1"/>
</dbReference>
<dbReference type="PDB" id="3LAZ">
    <property type="method" value="X-ray"/>
    <property type="resolution" value="1.92 A"/>
    <property type="chains" value="A/B=1-96"/>
</dbReference>
<dbReference type="PDB" id="6U7L">
    <property type="method" value="X-ray"/>
    <property type="resolution" value="2.75 A"/>
    <property type="chains" value="A/B/C/D=1-523"/>
</dbReference>
<dbReference type="PDBsum" id="3LAZ"/>
<dbReference type="PDBsum" id="6U7L"/>
<dbReference type="SMR" id="P39829"/>
<dbReference type="BioGRID" id="4259485">
    <property type="interactions" value="29"/>
</dbReference>
<dbReference type="BioGRID" id="851954">
    <property type="interactions" value="1"/>
</dbReference>
<dbReference type="FunCoup" id="P39829">
    <property type="interactions" value="333"/>
</dbReference>
<dbReference type="IntAct" id="P39829">
    <property type="interactions" value="5"/>
</dbReference>
<dbReference type="STRING" id="511145.b3128"/>
<dbReference type="jPOST" id="P39829"/>
<dbReference type="PaxDb" id="511145-b3128"/>
<dbReference type="EnsemblBacteria" id="AAC76162">
    <property type="protein sequence ID" value="AAC76162"/>
    <property type="gene ID" value="b3128"/>
</dbReference>
<dbReference type="GeneID" id="947641"/>
<dbReference type="KEGG" id="ecj:JW3097"/>
<dbReference type="KEGG" id="eco:b3128"/>
<dbReference type="KEGG" id="ecoc:C3026_17050"/>
<dbReference type="PATRIC" id="fig|1411691.4.peg.3603"/>
<dbReference type="EchoBASE" id="EB2413"/>
<dbReference type="eggNOG" id="COG2721">
    <property type="taxonomic scope" value="Bacteria"/>
</dbReference>
<dbReference type="HOGENOM" id="CLU_029189_0_0_6"/>
<dbReference type="InParanoid" id="P39829"/>
<dbReference type="OMA" id="VGWELFH"/>
<dbReference type="OrthoDB" id="9804574at2"/>
<dbReference type="PhylomeDB" id="P39829"/>
<dbReference type="BioCyc" id="EcoCyc:GALACTARDEHYDRA-MONOMER"/>
<dbReference type="BioCyc" id="MetaCyc:GALACTARDEHYDRA-MONOMER"/>
<dbReference type="SABIO-RK" id="P39829"/>
<dbReference type="UniPathway" id="UPA00565">
    <property type="reaction ID" value="UER00629"/>
</dbReference>
<dbReference type="EvolutionaryTrace" id="P39829"/>
<dbReference type="PRO" id="PR:P39829"/>
<dbReference type="Proteomes" id="UP000000625">
    <property type="component" value="Chromosome"/>
</dbReference>
<dbReference type="GO" id="GO:0008198">
    <property type="term" value="F:ferrous iron binding"/>
    <property type="evidence" value="ECO:0000314"/>
    <property type="project" value="EcoCyc"/>
</dbReference>
<dbReference type="GO" id="GO:0008867">
    <property type="term" value="F:galactarate dehydratase activity"/>
    <property type="evidence" value="ECO:0000314"/>
    <property type="project" value="EcoCyc"/>
</dbReference>
<dbReference type="GO" id="GO:0042803">
    <property type="term" value="F:protein homodimerization activity"/>
    <property type="evidence" value="ECO:0000314"/>
    <property type="project" value="EcoCyc"/>
</dbReference>
<dbReference type="GO" id="GO:0019698">
    <property type="term" value="P:D-galacturonate catabolic process"/>
    <property type="evidence" value="ECO:0000318"/>
    <property type="project" value="GO_Central"/>
</dbReference>
<dbReference type="GO" id="GO:0046392">
    <property type="term" value="P:galactarate catabolic process"/>
    <property type="evidence" value="ECO:0000314"/>
    <property type="project" value="EcoCyc"/>
</dbReference>
<dbReference type="CDD" id="cd11613">
    <property type="entry name" value="SAF_AH_GD"/>
    <property type="match status" value="1"/>
</dbReference>
<dbReference type="FunFam" id="2.30.130.110:FF:000001">
    <property type="entry name" value="Galactarate dehydratase (L-threo-forming)"/>
    <property type="match status" value="1"/>
</dbReference>
<dbReference type="Gene3D" id="2.30.130.110">
    <property type="match status" value="1"/>
</dbReference>
<dbReference type="HAMAP" id="MF_02031">
    <property type="entry name" value="Galactar_dehydrat"/>
    <property type="match status" value="1"/>
</dbReference>
<dbReference type="InterPro" id="IPR017654">
    <property type="entry name" value="GarD-like"/>
</dbReference>
<dbReference type="InterPro" id="IPR032893">
    <property type="entry name" value="GarD_Enterobacteriaceae"/>
</dbReference>
<dbReference type="InterPro" id="IPR048332">
    <property type="entry name" value="GD_AH_C"/>
</dbReference>
<dbReference type="InterPro" id="IPR007392">
    <property type="entry name" value="GD_AH_second"/>
</dbReference>
<dbReference type="InterPro" id="IPR013974">
    <property type="entry name" value="SAF"/>
</dbReference>
<dbReference type="InterPro" id="IPR044144">
    <property type="entry name" value="UxaA/GarD_SAF"/>
</dbReference>
<dbReference type="InterPro" id="IPR052172">
    <property type="entry name" value="UxaA_altronate/galactarate_dh"/>
</dbReference>
<dbReference type="NCBIfam" id="TIGR03248">
    <property type="entry name" value="galactar-dH20"/>
    <property type="match status" value="1"/>
</dbReference>
<dbReference type="PANTHER" id="PTHR30536">
    <property type="entry name" value="ALTRONATE/GALACTARATE DEHYDRATASE"/>
    <property type="match status" value="1"/>
</dbReference>
<dbReference type="PANTHER" id="PTHR30536:SF1">
    <property type="entry name" value="GALACTARATE DEHYDRATASE (L-THREO-FORMING)"/>
    <property type="match status" value="1"/>
</dbReference>
<dbReference type="Pfam" id="PF20629">
    <property type="entry name" value="GD_AH_C"/>
    <property type="match status" value="1"/>
</dbReference>
<dbReference type="Pfam" id="PF04295">
    <property type="entry name" value="GD_AH_second"/>
    <property type="match status" value="1"/>
</dbReference>
<dbReference type="Pfam" id="PF08666">
    <property type="entry name" value="SAF"/>
    <property type="match status" value="1"/>
</dbReference>
<dbReference type="SMART" id="SM00858">
    <property type="entry name" value="SAF"/>
    <property type="match status" value="1"/>
</dbReference>
<keyword id="KW-0002">3D-structure</keyword>
<keyword id="KW-0408">Iron</keyword>
<keyword id="KW-0456">Lyase</keyword>
<keyword id="KW-0479">Metal-binding</keyword>
<keyword id="KW-1185">Reference proteome</keyword>
<protein>
    <recommendedName>
        <fullName evidence="1 6">Galactarate dehydratase (L-threo-forming)</fullName>
        <shortName evidence="1 6">GalcD</shortName>
        <ecNumber evidence="1 4">4.2.1.42</ecNumber>
    </recommendedName>
</protein>
<proteinExistence type="evidence at protein level"/>
<name>GARD_ECOLI</name>
<organism>
    <name type="scientific">Escherichia coli (strain K12)</name>
    <dbReference type="NCBI Taxonomy" id="83333"/>
    <lineage>
        <taxon>Bacteria</taxon>
        <taxon>Pseudomonadati</taxon>
        <taxon>Pseudomonadota</taxon>
        <taxon>Gammaproteobacteria</taxon>
        <taxon>Enterobacterales</taxon>
        <taxon>Enterobacteriaceae</taxon>
        <taxon>Escherichia</taxon>
    </lineage>
</organism>
<sequence length="523" mass="56402">MANIEIRQETPTAFYIKVHDTDNVAIIVNDNGLKAGTRFPDGLELIEHIPQGHKVALLDIPANGEIIRYGEVIGYAVRAIPRGSWIDESMVVLPEAPPLHTLPLATKVPEPLPPLEGYTFEGYRNADGSVGTKNLLGITTSVHCVAGVVDYVVKIIERDLLPKYPNVDGVVGLNHLYGCGVAINAPAAVVPIRTIHNISLNPNFGGEVMVIGLGCEKLQPERLLTGTDDVQAIPVESASIVSLQDEKHVGFQSMVEDILQIAERHLQKLNQRQRETCPASELVVGMQCGGSDAFSGVTANPAVGYASDLLVRCGATVMFSEVTEVRDAIHLLTPRAVNEEVGKRLLEEMEWYDNYLNMGKTDRSANPSPGNKKGGLANVVEKALGSIAKSGKSAIVEVLSPGQRPTKRGLIYAATPASDFVCGTQQVASGITVQVFTTGRGTPYGLMAVPVIKMATRTELANRWFDLMDINAGTIATGEETIEEVGWKLFHFILDVASGKKKTFSDQWGLHNQLAVFNPAPVT</sequence>